<dbReference type="EMBL" id="U30821">
    <property type="protein sequence ID" value="AAA81187.1"/>
    <property type="molecule type" value="Genomic_DNA"/>
</dbReference>
<dbReference type="PIR" id="T06844">
    <property type="entry name" value="T06844"/>
</dbReference>
<dbReference type="RefSeq" id="NP_043156.1">
    <property type="nucleotide sequence ID" value="NC_001675.1"/>
</dbReference>
<dbReference type="SMR" id="P48127"/>
<dbReference type="GeneID" id="801617"/>
<dbReference type="GO" id="GO:0009842">
    <property type="term" value="C:cyanelle"/>
    <property type="evidence" value="ECO:0007669"/>
    <property type="project" value="UniProtKB-SubCell"/>
</dbReference>
<dbReference type="GO" id="GO:0005762">
    <property type="term" value="C:mitochondrial large ribosomal subunit"/>
    <property type="evidence" value="ECO:0007669"/>
    <property type="project" value="TreeGrafter"/>
</dbReference>
<dbReference type="GO" id="GO:0003735">
    <property type="term" value="F:structural constituent of ribosome"/>
    <property type="evidence" value="ECO:0007669"/>
    <property type="project" value="InterPro"/>
</dbReference>
<dbReference type="GO" id="GO:0006412">
    <property type="term" value="P:translation"/>
    <property type="evidence" value="ECO:0007669"/>
    <property type="project" value="InterPro"/>
</dbReference>
<dbReference type="Gene3D" id="2.30.30.790">
    <property type="match status" value="1"/>
</dbReference>
<dbReference type="HAMAP" id="MF_00402">
    <property type="entry name" value="Ribosomal_bL19"/>
    <property type="match status" value="1"/>
</dbReference>
<dbReference type="InterPro" id="IPR001857">
    <property type="entry name" value="Ribosomal_bL19"/>
</dbReference>
<dbReference type="InterPro" id="IPR018257">
    <property type="entry name" value="Ribosomal_bL19_CS"/>
</dbReference>
<dbReference type="InterPro" id="IPR038657">
    <property type="entry name" value="Ribosomal_bL19_sf"/>
</dbReference>
<dbReference type="InterPro" id="IPR008991">
    <property type="entry name" value="Translation_prot_SH3-like_sf"/>
</dbReference>
<dbReference type="NCBIfam" id="TIGR01024">
    <property type="entry name" value="rplS_bact"/>
    <property type="match status" value="1"/>
</dbReference>
<dbReference type="PANTHER" id="PTHR15680:SF9">
    <property type="entry name" value="LARGE RIBOSOMAL SUBUNIT PROTEIN BL19M"/>
    <property type="match status" value="1"/>
</dbReference>
<dbReference type="PANTHER" id="PTHR15680">
    <property type="entry name" value="RIBOSOMAL PROTEIN L19"/>
    <property type="match status" value="1"/>
</dbReference>
<dbReference type="Pfam" id="PF01245">
    <property type="entry name" value="Ribosomal_L19"/>
    <property type="match status" value="1"/>
</dbReference>
<dbReference type="PIRSF" id="PIRSF002191">
    <property type="entry name" value="Ribosomal_L19"/>
    <property type="match status" value="1"/>
</dbReference>
<dbReference type="PRINTS" id="PR00061">
    <property type="entry name" value="RIBOSOMALL19"/>
</dbReference>
<dbReference type="SUPFAM" id="SSF50104">
    <property type="entry name" value="Translation proteins SH3-like domain"/>
    <property type="match status" value="1"/>
</dbReference>
<dbReference type="PROSITE" id="PS01015">
    <property type="entry name" value="RIBOSOMAL_L19"/>
    <property type="match status" value="1"/>
</dbReference>
<gene>
    <name type="primary">rpl19</name>
</gene>
<evidence type="ECO:0000250" key="1"/>
<evidence type="ECO:0000305" key="2"/>
<accession>P48127</accession>
<reference key="1">
    <citation type="journal article" date="1995" name="Plant Mol. Biol. Rep.">
        <title>Nucleotide sequence of the cyanelle DNA from Cyanophora paradoxa.</title>
        <authorList>
            <person name="Stirewalt V.L."/>
            <person name="Michalowski C.B."/>
            <person name="Loeffelhardt W."/>
            <person name="Bohnert H.J."/>
            <person name="Bryant D.A."/>
        </authorList>
    </citation>
    <scope>NUCLEOTIDE SEQUENCE [LARGE SCALE GENOMIC DNA]</scope>
    <source>
        <strain>UTEX LB 555 / Pringsheim</strain>
    </source>
</reference>
<reference key="2">
    <citation type="book" date="1997" name="Eukaryotism and symbiosis">
        <title>The complete sequence of the cyanelle genome of Cyanophora paradoxa: the genetic complexity of a primitive plastid.</title>
        <editorList>
            <person name="Schenk H.E.A."/>
            <person name="Herrmann R."/>
            <person name="Jeon K.W."/>
            <person name="Mueller N.E."/>
            <person name="Schwemmler W."/>
        </editorList>
        <authorList>
            <person name="Loeffelhardt W."/>
            <person name="Stirewalt V.L."/>
            <person name="Michalowski C.B."/>
            <person name="Annarella M."/>
            <person name="Farley J.Y."/>
            <person name="Schluchter W.M."/>
            <person name="Chung S."/>
            <person name="Newmann-Spallart C."/>
            <person name="Steiner J.M."/>
            <person name="Jakowitsch J."/>
            <person name="Bohnert H.J."/>
            <person name="Bryant D.A."/>
        </authorList>
    </citation>
    <scope>NUCLEOTIDE SEQUENCE [LARGE SCALE GENOMIC DNA]</scope>
    <source>
        <strain>UTEX LB 555 / Pringsheim</strain>
    </source>
</reference>
<name>RK19_CYAPA</name>
<organism>
    <name type="scientific">Cyanophora paradoxa</name>
    <dbReference type="NCBI Taxonomy" id="2762"/>
    <lineage>
        <taxon>Eukaryota</taxon>
        <taxon>Glaucocystophyceae</taxon>
        <taxon>Cyanophoraceae</taxon>
        <taxon>Cyanophora</taxon>
    </lineage>
</organism>
<comment type="function">
    <text evidence="1">This protein is located at the 30S-50S ribosomal subunit interface and may play a role in the structure and function of the aminoacyl-tRNA binding site.</text>
</comment>
<comment type="subcellular location">
    <subcellularLocation>
        <location>Plastid</location>
        <location>Cyanelle</location>
    </subcellularLocation>
</comment>
<comment type="similarity">
    <text evidence="2">Belongs to the bacterial ribosomal protein bL19 family.</text>
</comment>
<proteinExistence type="inferred from homology"/>
<sequence length="131" mass="15304">MHTQQLISQIESQYLKDNLPEICVGDTVKVGVLIQEEDNKNSGEKERIQFYEGVVISLSKLKNINGTIRVRRILQGIGIERTFLVHSPLIKSINIIRRSKVRRAKLYYLRTLTGKATRLKQRLIKHYRLIY</sequence>
<geneLocation type="cyanelle"/>
<keyword id="KW-0194">Cyanelle</keyword>
<keyword id="KW-0934">Plastid</keyword>
<keyword id="KW-0687">Ribonucleoprotein</keyword>
<keyword id="KW-0689">Ribosomal protein</keyword>
<feature type="chain" id="PRO_0000163579" description="Large ribosomal subunit protein bL19c">
    <location>
        <begin position="1"/>
        <end position="131"/>
    </location>
</feature>
<protein>
    <recommendedName>
        <fullName evidence="2">Large ribosomal subunit protein bL19c</fullName>
    </recommendedName>
    <alternativeName>
        <fullName>50S ribosomal protein L19, cyanelle</fullName>
    </alternativeName>
</protein>